<accession>Q67PG0</accession>
<proteinExistence type="inferred from homology"/>
<protein>
    <recommendedName>
        <fullName evidence="1">Beta-ketoacyl-[acyl-carrier-protein] synthase III</fullName>
        <shortName evidence="1">Beta-ketoacyl-ACP synthase III</shortName>
        <shortName evidence="1">KAS III</shortName>
        <ecNumber evidence="1">2.3.1.180</ecNumber>
    </recommendedName>
    <alternativeName>
        <fullName evidence="1">3-oxoacyl-[acyl-carrier-protein] synthase 3</fullName>
    </alternativeName>
    <alternativeName>
        <fullName evidence="1">3-oxoacyl-[acyl-carrier-protein] synthase III</fullName>
    </alternativeName>
</protein>
<keyword id="KW-0012">Acyltransferase</keyword>
<keyword id="KW-0963">Cytoplasm</keyword>
<keyword id="KW-0275">Fatty acid biosynthesis</keyword>
<keyword id="KW-0276">Fatty acid metabolism</keyword>
<keyword id="KW-0444">Lipid biosynthesis</keyword>
<keyword id="KW-0443">Lipid metabolism</keyword>
<keyword id="KW-0511">Multifunctional enzyme</keyword>
<keyword id="KW-1185">Reference proteome</keyword>
<keyword id="KW-0808">Transferase</keyword>
<dbReference type="EC" id="2.3.1.180" evidence="1"/>
<dbReference type="EMBL" id="AP006840">
    <property type="protein sequence ID" value="BAD40433.1"/>
    <property type="molecule type" value="Genomic_DNA"/>
</dbReference>
<dbReference type="RefSeq" id="WP_011195578.1">
    <property type="nucleotide sequence ID" value="NC_006177.1"/>
</dbReference>
<dbReference type="SMR" id="Q67PG0"/>
<dbReference type="STRING" id="292459.STH1448"/>
<dbReference type="KEGG" id="sth:STH1448"/>
<dbReference type="eggNOG" id="COG0332">
    <property type="taxonomic scope" value="Bacteria"/>
</dbReference>
<dbReference type="HOGENOM" id="CLU_039592_3_1_9"/>
<dbReference type="OrthoDB" id="9815506at2"/>
<dbReference type="UniPathway" id="UPA00094"/>
<dbReference type="Proteomes" id="UP000000417">
    <property type="component" value="Chromosome"/>
</dbReference>
<dbReference type="GO" id="GO:0005737">
    <property type="term" value="C:cytoplasm"/>
    <property type="evidence" value="ECO:0007669"/>
    <property type="project" value="UniProtKB-SubCell"/>
</dbReference>
<dbReference type="GO" id="GO:0004315">
    <property type="term" value="F:3-oxoacyl-[acyl-carrier-protein] synthase activity"/>
    <property type="evidence" value="ECO:0007669"/>
    <property type="project" value="InterPro"/>
</dbReference>
<dbReference type="GO" id="GO:0033818">
    <property type="term" value="F:beta-ketoacyl-acyl-carrier-protein synthase III activity"/>
    <property type="evidence" value="ECO:0007669"/>
    <property type="project" value="UniProtKB-UniRule"/>
</dbReference>
<dbReference type="GO" id="GO:0006633">
    <property type="term" value="P:fatty acid biosynthetic process"/>
    <property type="evidence" value="ECO:0007669"/>
    <property type="project" value="UniProtKB-UniRule"/>
</dbReference>
<dbReference type="GO" id="GO:0044550">
    <property type="term" value="P:secondary metabolite biosynthetic process"/>
    <property type="evidence" value="ECO:0007669"/>
    <property type="project" value="TreeGrafter"/>
</dbReference>
<dbReference type="CDD" id="cd00830">
    <property type="entry name" value="KAS_III"/>
    <property type="match status" value="1"/>
</dbReference>
<dbReference type="FunFam" id="3.40.47.10:FF:000004">
    <property type="entry name" value="3-oxoacyl-[acyl-carrier-protein] synthase 3"/>
    <property type="match status" value="1"/>
</dbReference>
<dbReference type="Gene3D" id="3.40.47.10">
    <property type="match status" value="1"/>
</dbReference>
<dbReference type="HAMAP" id="MF_01815">
    <property type="entry name" value="FabH"/>
    <property type="match status" value="1"/>
</dbReference>
<dbReference type="InterPro" id="IPR013747">
    <property type="entry name" value="ACP_syn_III_C"/>
</dbReference>
<dbReference type="InterPro" id="IPR013751">
    <property type="entry name" value="ACP_syn_III_N"/>
</dbReference>
<dbReference type="InterPro" id="IPR004655">
    <property type="entry name" value="FabH"/>
</dbReference>
<dbReference type="InterPro" id="IPR016039">
    <property type="entry name" value="Thiolase-like"/>
</dbReference>
<dbReference type="NCBIfam" id="TIGR00747">
    <property type="entry name" value="fabH"/>
    <property type="match status" value="1"/>
</dbReference>
<dbReference type="NCBIfam" id="NF006829">
    <property type="entry name" value="PRK09352.1"/>
    <property type="match status" value="1"/>
</dbReference>
<dbReference type="PANTHER" id="PTHR34069">
    <property type="entry name" value="3-OXOACYL-[ACYL-CARRIER-PROTEIN] SYNTHASE 3"/>
    <property type="match status" value="1"/>
</dbReference>
<dbReference type="PANTHER" id="PTHR34069:SF2">
    <property type="entry name" value="BETA-KETOACYL-[ACYL-CARRIER-PROTEIN] SYNTHASE III"/>
    <property type="match status" value="1"/>
</dbReference>
<dbReference type="Pfam" id="PF08545">
    <property type="entry name" value="ACP_syn_III"/>
    <property type="match status" value="1"/>
</dbReference>
<dbReference type="Pfam" id="PF08541">
    <property type="entry name" value="ACP_syn_III_C"/>
    <property type="match status" value="1"/>
</dbReference>
<dbReference type="SUPFAM" id="SSF53901">
    <property type="entry name" value="Thiolase-like"/>
    <property type="match status" value="1"/>
</dbReference>
<sequence length="330" mass="34934">MKIRPVGITGLGMAVPERVLTNHDLERMVDTSDEWIRTRTGIRERRIAAPHEASSDYALRAAREAMAQAGVTPEQIDLIICATVTPDMPMPATAALVQAALGAHRAAAFDLSAACPGWIYGVVMAQQSIATGLYDCALVIGVELLSKMVNWQDRKTCVLFGDAAGAAVLQPVSEGRGILSSVLGAEGAGHCHLYTPAGGSRLPASPETVAQGLHYVHMNGPEVFKFAVRVMDEATVQVVEKAGLTVGDIDLLVPHQANVRIIDSAVKRLGLAPEKVVVNLDRYGNTSSASIPVALTEALTEGRVRDGDLVVCVSFGAGLVWGALALRWGR</sequence>
<comment type="function">
    <text evidence="1">Catalyzes the condensation reaction of fatty acid synthesis by the addition to an acyl acceptor of two carbons from malonyl-ACP. Catalyzes the first condensation reaction which initiates fatty acid synthesis and may therefore play a role in governing the total rate of fatty acid production. Possesses both acetoacetyl-ACP synthase and acetyl transacylase activities. Its substrate specificity determines the biosynthesis of branched-chain and/or straight-chain of fatty acids.</text>
</comment>
<comment type="catalytic activity">
    <reaction evidence="1">
        <text>malonyl-[ACP] + acetyl-CoA + H(+) = 3-oxobutanoyl-[ACP] + CO2 + CoA</text>
        <dbReference type="Rhea" id="RHEA:12080"/>
        <dbReference type="Rhea" id="RHEA-COMP:9623"/>
        <dbReference type="Rhea" id="RHEA-COMP:9625"/>
        <dbReference type="ChEBI" id="CHEBI:15378"/>
        <dbReference type="ChEBI" id="CHEBI:16526"/>
        <dbReference type="ChEBI" id="CHEBI:57287"/>
        <dbReference type="ChEBI" id="CHEBI:57288"/>
        <dbReference type="ChEBI" id="CHEBI:78449"/>
        <dbReference type="ChEBI" id="CHEBI:78450"/>
        <dbReference type="EC" id="2.3.1.180"/>
    </reaction>
</comment>
<comment type="pathway">
    <text evidence="1">Lipid metabolism; fatty acid biosynthesis.</text>
</comment>
<comment type="subunit">
    <text evidence="1">Homodimer.</text>
</comment>
<comment type="subcellular location">
    <subcellularLocation>
        <location evidence="1">Cytoplasm</location>
    </subcellularLocation>
</comment>
<comment type="domain">
    <text evidence="1">The last Arg residue of the ACP-binding site is essential for the weak association between ACP/AcpP and FabH.</text>
</comment>
<comment type="similarity">
    <text evidence="1">Belongs to the thiolase-like superfamily. FabH family.</text>
</comment>
<evidence type="ECO:0000255" key="1">
    <source>
        <dbReference type="HAMAP-Rule" id="MF_01815"/>
    </source>
</evidence>
<gene>
    <name evidence="1" type="primary">fabH</name>
    <name type="ordered locus">STH1448</name>
</gene>
<reference key="1">
    <citation type="journal article" date="2004" name="Nucleic Acids Res.">
        <title>Genome sequence of Symbiobacterium thermophilum, an uncultivable bacterium that depends on microbial commensalism.</title>
        <authorList>
            <person name="Ueda K."/>
            <person name="Yamashita A."/>
            <person name="Ishikawa J."/>
            <person name="Shimada M."/>
            <person name="Watsuji T."/>
            <person name="Morimura K."/>
            <person name="Ikeda H."/>
            <person name="Hattori M."/>
            <person name="Beppu T."/>
        </authorList>
    </citation>
    <scope>NUCLEOTIDE SEQUENCE [LARGE SCALE GENOMIC DNA]</scope>
    <source>
        <strain>DSM 24528 / JCM 14929 / IAM 14863 / T</strain>
    </source>
</reference>
<organism>
    <name type="scientific">Symbiobacterium thermophilum (strain DSM 24528 / JCM 14929 / IAM 14863 / T)</name>
    <dbReference type="NCBI Taxonomy" id="292459"/>
    <lineage>
        <taxon>Bacteria</taxon>
        <taxon>Bacillati</taxon>
        <taxon>Bacillota</taxon>
        <taxon>Clostridia</taxon>
        <taxon>Eubacteriales</taxon>
        <taxon>Symbiobacteriaceae</taxon>
        <taxon>Symbiobacterium</taxon>
    </lineage>
</organism>
<feature type="chain" id="PRO_1000187908" description="Beta-ketoacyl-[acyl-carrier-protein] synthase III">
    <location>
        <begin position="1"/>
        <end position="330"/>
    </location>
</feature>
<feature type="region of interest" description="ACP-binding" evidence="1">
    <location>
        <begin position="256"/>
        <end position="260"/>
    </location>
</feature>
<feature type="active site" evidence="1">
    <location>
        <position position="115"/>
    </location>
</feature>
<feature type="active site" evidence="1">
    <location>
        <position position="255"/>
    </location>
</feature>
<feature type="active site" evidence="1">
    <location>
        <position position="285"/>
    </location>
</feature>
<name>FABH_SYMTH</name>